<reference key="1">
    <citation type="submission" date="1995-06" db="EMBL/GenBank/DDBJ databases">
        <authorList>
            <person name="Lee Y.H."/>
            <person name="Oguchi H."/>
            <person name="Gonzalez F.J."/>
        </authorList>
    </citation>
    <scope>NUCLEOTIDE SEQUENCE [GENOMIC DNA]</scope>
    <source>
        <strain>129/Sv</strain>
        <tissue>Liver</tissue>
    </source>
</reference>
<reference key="2">
    <citation type="journal article" date="2004" name="Genome Res.">
        <title>The status, quality, and expansion of the NIH full-length cDNA project: the Mammalian Gene Collection (MGC).</title>
        <authorList>
            <consortium name="The MGC Project Team"/>
        </authorList>
    </citation>
    <scope>NUCLEOTIDE SEQUENCE [LARGE SCALE MRNA]</scope>
    <source>
        <tissue>Liver</tissue>
    </source>
</reference>
<reference key="3">
    <citation type="journal article" date="1996" name="EMBO J.">
        <title>The two PAR leucine zipper proteins, TEF and DBP, display similar circadian and tissue-specific expression, but have different target promoter preferences.</title>
        <authorList>
            <person name="Fonjallaz P."/>
            <person name="Ossipow V."/>
            <person name="Wanner G."/>
            <person name="Schibler U."/>
        </authorList>
    </citation>
    <scope>CIRCADIAN INDUCTION</scope>
</reference>
<reference key="4">
    <citation type="journal article" date="2004" name="Genes Dev.">
        <title>The loss of circadian PAR bZip transcription factors results in epilepsy.</title>
        <authorList>
            <person name="Gachon F."/>
            <person name="Fonjallaz P."/>
            <person name="Damiola F."/>
            <person name="Gos P."/>
            <person name="Kodama T."/>
            <person name="Zakany J."/>
            <person name="Duboule D."/>
            <person name="Petit B."/>
            <person name="Tafti M."/>
            <person name="Schibler U."/>
        </authorList>
    </citation>
    <scope>INVOLVEMENT IN EPILEPSY</scope>
</reference>
<reference key="5">
    <citation type="journal article" date="2010" name="Cell">
        <title>A tissue-specific atlas of mouse protein phosphorylation and expression.</title>
        <authorList>
            <person name="Huttlin E.L."/>
            <person name="Jedrychowski M.P."/>
            <person name="Elias J.E."/>
            <person name="Goswami T."/>
            <person name="Rad R."/>
            <person name="Beausoleil S.A."/>
            <person name="Villen J."/>
            <person name="Haas W."/>
            <person name="Sowa M.E."/>
            <person name="Gygi S.P."/>
        </authorList>
    </citation>
    <scope>PHOSPHORYLATION [LARGE SCALE ANALYSIS] AT SER-86</scope>
    <scope>IDENTIFICATION BY MASS SPECTROMETRY [LARGE SCALE ANALYSIS]</scope>
    <source>
        <tissue>Liver</tissue>
        <tissue>Pancreas</tissue>
    </source>
</reference>
<feature type="chain" id="PRO_0000076508" description="D site-binding protein">
    <location>
        <begin position="1"/>
        <end position="325"/>
    </location>
</feature>
<feature type="domain" description="bZIP" evidence="2">
    <location>
        <begin position="255"/>
        <end position="318"/>
    </location>
</feature>
<feature type="region of interest" description="Disordered" evidence="3">
    <location>
        <begin position="1"/>
        <end position="98"/>
    </location>
</feature>
<feature type="region of interest" description="Disordered" evidence="3">
    <location>
        <begin position="124"/>
        <end position="203"/>
    </location>
</feature>
<feature type="region of interest" description="Disordered" evidence="3">
    <location>
        <begin position="230"/>
        <end position="256"/>
    </location>
</feature>
<feature type="region of interest" description="Basic motif" evidence="2">
    <location>
        <begin position="257"/>
        <end position="279"/>
    </location>
</feature>
<feature type="region of interest" description="Leucine-zipper" evidence="2">
    <location>
        <begin position="283"/>
        <end position="297"/>
    </location>
</feature>
<feature type="compositionally biased region" description="Gly residues" evidence="3">
    <location>
        <begin position="17"/>
        <end position="28"/>
    </location>
</feature>
<feature type="compositionally biased region" description="Low complexity" evidence="3">
    <location>
        <begin position="71"/>
        <end position="80"/>
    </location>
</feature>
<feature type="compositionally biased region" description="Low complexity" evidence="3">
    <location>
        <begin position="88"/>
        <end position="98"/>
    </location>
</feature>
<feature type="compositionally biased region" description="Pro residues" evidence="3">
    <location>
        <begin position="129"/>
        <end position="153"/>
    </location>
</feature>
<feature type="compositionally biased region" description="Low complexity" evidence="3">
    <location>
        <begin position="154"/>
        <end position="171"/>
    </location>
</feature>
<feature type="modified residue" description="Phosphoserine" evidence="5">
    <location>
        <position position="86"/>
    </location>
</feature>
<feature type="sequence conflict" description="In Ref. 1; AAA73924." evidence="4" ref="1">
    <original>S</original>
    <variation>T</variation>
    <location>
        <position position="60"/>
    </location>
</feature>
<feature type="sequence conflict" description="In Ref. 1; AAA73924." evidence="4" ref="1">
    <original>L</original>
    <variation>F</variation>
    <location>
        <position position="109"/>
    </location>
</feature>
<keyword id="KW-0010">Activator</keyword>
<keyword id="KW-0090">Biological rhythms</keyword>
<keyword id="KW-0238">DNA-binding</keyword>
<keyword id="KW-0539">Nucleus</keyword>
<keyword id="KW-0597">Phosphoprotein</keyword>
<keyword id="KW-1185">Reference proteome</keyword>
<keyword id="KW-0804">Transcription</keyword>
<keyword id="KW-0805">Transcription regulation</keyword>
<evidence type="ECO:0000250" key="1"/>
<evidence type="ECO:0000255" key="2">
    <source>
        <dbReference type="PROSITE-ProRule" id="PRU00978"/>
    </source>
</evidence>
<evidence type="ECO:0000256" key="3">
    <source>
        <dbReference type="SAM" id="MobiDB-lite"/>
    </source>
</evidence>
<evidence type="ECO:0000305" key="4"/>
<evidence type="ECO:0007744" key="5">
    <source>
    </source>
</evidence>
<accession>Q60925</accession>
<accession>Q8VCX3</accession>
<dbReference type="EMBL" id="U29762">
    <property type="protein sequence ID" value="AAA73924.1"/>
    <property type="molecule type" value="Genomic_DNA"/>
</dbReference>
<dbReference type="EMBL" id="BC018323">
    <property type="protein sequence ID" value="AAH18323.1"/>
    <property type="molecule type" value="mRNA"/>
</dbReference>
<dbReference type="CCDS" id="CCDS21260.1"/>
<dbReference type="RefSeq" id="NP_058670.2">
    <property type="nucleotide sequence ID" value="NM_016974.4"/>
</dbReference>
<dbReference type="SMR" id="Q60925"/>
<dbReference type="BioGRID" id="199060">
    <property type="interactions" value="7"/>
</dbReference>
<dbReference type="FunCoup" id="Q60925">
    <property type="interactions" value="365"/>
</dbReference>
<dbReference type="IntAct" id="Q60925">
    <property type="interactions" value="4"/>
</dbReference>
<dbReference type="STRING" id="10090.ENSMUSP00000079693"/>
<dbReference type="iPTMnet" id="Q60925"/>
<dbReference type="PhosphoSitePlus" id="Q60925"/>
<dbReference type="SwissPalm" id="Q60925"/>
<dbReference type="PaxDb" id="10090-ENSMUSP00000079693"/>
<dbReference type="ProteomicsDB" id="279158"/>
<dbReference type="Antibodypedia" id="18372">
    <property type="antibodies" value="123 antibodies from 22 providers"/>
</dbReference>
<dbReference type="DNASU" id="13170"/>
<dbReference type="Ensembl" id="ENSMUST00000080885.12">
    <property type="protein sequence ID" value="ENSMUSP00000079693.4"/>
    <property type="gene ID" value="ENSMUSG00000059824.13"/>
</dbReference>
<dbReference type="GeneID" id="13170"/>
<dbReference type="KEGG" id="mmu:13170"/>
<dbReference type="UCSC" id="uc009gws.2">
    <property type="organism name" value="mouse"/>
</dbReference>
<dbReference type="AGR" id="MGI:94866"/>
<dbReference type="CTD" id="1628"/>
<dbReference type="MGI" id="MGI:94866">
    <property type="gene designation" value="Dbp"/>
</dbReference>
<dbReference type="VEuPathDB" id="HostDB:ENSMUSG00000059824"/>
<dbReference type="eggNOG" id="KOG3119">
    <property type="taxonomic scope" value="Eukaryota"/>
</dbReference>
<dbReference type="GeneTree" id="ENSGT00940000162136"/>
<dbReference type="HOGENOM" id="CLU_051922_0_0_1"/>
<dbReference type="InParanoid" id="Q60925"/>
<dbReference type="OMA" id="EYEHPSS"/>
<dbReference type="OrthoDB" id="6022300at2759"/>
<dbReference type="PhylomeDB" id="Q60925"/>
<dbReference type="TreeFam" id="TF315869"/>
<dbReference type="BioGRID-ORCS" id="13170">
    <property type="hits" value="2 hits in 82 CRISPR screens"/>
</dbReference>
<dbReference type="PRO" id="PR:Q60925"/>
<dbReference type="Proteomes" id="UP000000589">
    <property type="component" value="Chromosome 7"/>
</dbReference>
<dbReference type="RNAct" id="Q60925">
    <property type="molecule type" value="protein"/>
</dbReference>
<dbReference type="Bgee" id="ENSMUSG00000059824">
    <property type="expression patterns" value="Expressed in pigmented layer of retina and 249 other cell types or tissues"/>
</dbReference>
<dbReference type="ExpressionAtlas" id="Q60925">
    <property type="expression patterns" value="baseline and differential"/>
</dbReference>
<dbReference type="GO" id="GO:0005654">
    <property type="term" value="C:nucleoplasm"/>
    <property type="evidence" value="ECO:0000304"/>
    <property type="project" value="Reactome"/>
</dbReference>
<dbReference type="GO" id="GO:0090575">
    <property type="term" value="C:RNA polymerase II transcription regulator complex"/>
    <property type="evidence" value="ECO:0007669"/>
    <property type="project" value="Ensembl"/>
</dbReference>
<dbReference type="GO" id="GO:0001228">
    <property type="term" value="F:DNA-binding transcription activator activity, RNA polymerase II-specific"/>
    <property type="evidence" value="ECO:0007669"/>
    <property type="project" value="Ensembl"/>
</dbReference>
<dbReference type="GO" id="GO:0000977">
    <property type="term" value="F:RNA polymerase II transcription regulatory region sequence-specific DNA binding"/>
    <property type="evidence" value="ECO:0007669"/>
    <property type="project" value="Ensembl"/>
</dbReference>
<dbReference type="GO" id="GO:0007623">
    <property type="term" value="P:circadian rhythm"/>
    <property type="evidence" value="ECO:0000304"/>
    <property type="project" value="MGI"/>
</dbReference>
<dbReference type="GO" id="GO:0001889">
    <property type="term" value="P:liver development"/>
    <property type="evidence" value="ECO:0007669"/>
    <property type="project" value="Ensembl"/>
</dbReference>
<dbReference type="GO" id="GO:0006355">
    <property type="term" value="P:regulation of DNA-templated transcription"/>
    <property type="evidence" value="ECO:0000304"/>
    <property type="project" value="MGI"/>
</dbReference>
<dbReference type="CDD" id="cd14695">
    <property type="entry name" value="bZIP_HLF"/>
    <property type="match status" value="1"/>
</dbReference>
<dbReference type="FunFam" id="1.20.5.170:FF:000007">
    <property type="entry name" value="hepatic leukemia factor isoform X2"/>
    <property type="match status" value="1"/>
</dbReference>
<dbReference type="Gene3D" id="1.20.5.170">
    <property type="match status" value="1"/>
</dbReference>
<dbReference type="InterPro" id="IPR004827">
    <property type="entry name" value="bZIP"/>
</dbReference>
<dbReference type="InterPro" id="IPR046347">
    <property type="entry name" value="bZIP_sf"/>
</dbReference>
<dbReference type="InterPro" id="IPR040223">
    <property type="entry name" value="PAR_bZIP"/>
</dbReference>
<dbReference type="PANTHER" id="PTHR11988:SF7">
    <property type="entry name" value="D SITE-BINDING PROTEIN"/>
    <property type="match status" value="1"/>
</dbReference>
<dbReference type="PANTHER" id="PTHR11988">
    <property type="entry name" value="THYROTROPH EMBRYONIC FACTOR RELATED"/>
    <property type="match status" value="1"/>
</dbReference>
<dbReference type="Pfam" id="PF07716">
    <property type="entry name" value="bZIP_2"/>
    <property type="match status" value="1"/>
</dbReference>
<dbReference type="SMART" id="SM00338">
    <property type="entry name" value="BRLZ"/>
    <property type="match status" value="1"/>
</dbReference>
<dbReference type="SUPFAM" id="SSF57959">
    <property type="entry name" value="Leucine zipper domain"/>
    <property type="match status" value="1"/>
</dbReference>
<dbReference type="PROSITE" id="PS50217">
    <property type="entry name" value="BZIP"/>
    <property type="match status" value="1"/>
</dbReference>
<name>DBP_MOUSE</name>
<sequence length="325" mass="34380">MARPLSDRTPGPLLLGGPAGAPPGGGALLGLRSLLQGNSKPKEPASCLLKEKERKATLPSAPVPGPGLETAGPADAPSGAVSGGGSPRGRSGPVAGPSLFAPLLWERTLPFGDVEYVDLDAFLLEHGLPPSPPPPGGLSPAPSPARTPAPSPGPGSCSSSSPRSSPGHAPARATLGAAGGHRAGLTSRDTPSPVDPDTVEVLMTFEPDPADLALSSIPGHETFDPRRHRFSEEELKPQPIMKKARKVQVPEEQKDEKYWSRRYKNNEAAKRSRDARRLKENQISVRAAFLEKENALLRQEVVAVRQELSHYRAVLSRYQAQHGTL</sequence>
<organism>
    <name type="scientific">Mus musculus</name>
    <name type="common">Mouse</name>
    <dbReference type="NCBI Taxonomy" id="10090"/>
    <lineage>
        <taxon>Eukaryota</taxon>
        <taxon>Metazoa</taxon>
        <taxon>Chordata</taxon>
        <taxon>Craniata</taxon>
        <taxon>Vertebrata</taxon>
        <taxon>Euteleostomi</taxon>
        <taxon>Mammalia</taxon>
        <taxon>Eutheria</taxon>
        <taxon>Euarchontoglires</taxon>
        <taxon>Glires</taxon>
        <taxon>Rodentia</taxon>
        <taxon>Myomorpha</taxon>
        <taxon>Muroidea</taxon>
        <taxon>Muridae</taxon>
        <taxon>Murinae</taxon>
        <taxon>Mus</taxon>
        <taxon>Mus</taxon>
    </lineage>
</organism>
<gene>
    <name type="primary">Dbp</name>
</gene>
<comment type="function">
    <text evidence="1">This transcriptional activator recognizes and binds to the sequence 5'-RTTAYGTAAY-3' found in the promoter of genes such as albumin, CYP2A4 and CYP2A5. It is not essential for circadian rhythm generation, but modulates important clock output genes. May be a direct target for regulation by the circadian pacemaker component clock. May affect circadian period and sleep regulation (By similarity).</text>
</comment>
<comment type="subunit">
    <text evidence="1">Binds DNA as a homodimer or a heterodimer. Can form a heterodimer with TEF (By similarity).</text>
</comment>
<comment type="subcellular location">
    <subcellularLocation>
        <location>Nucleus</location>
    </subcellularLocation>
</comment>
<comment type="tissue specificity">
    <text>Expressed in the suprachiasmatic nuclei (SCN) and in most peripheral tissues, with a strong circadian rhythmicity.</text>
</comment>
<comment type="induction">
    <text>Accumulates according to a robust circadian rhythm in liver and kidney. In liver nuclei, the amplitude of daily oscillation has been estimated to be &gt;50-fold, and 2-fold in the brain.</text>
</comment>
<comment type="miscellaneous">
    <text>Mice deficient for all three PAR bZIP proteins (DBP, HLF and TEF) display a dramatically shortened life span and are highly susceptible to generalized spontaneous and audiogenic epilepsies (due for example to the noise of a vacuum cleaner) that are frequently lethal. The down-regulation of pyridoxal kinase (Pdxk) expression in these mice may participate in this seizure phenotype.</text>
</comment>
<comment type="similarity">
    <text evidence="4">Belongs to the bZIP family. PAR subfamily.</text>
</comment>
<protein>
    <recommendedName>
        <fullName>D site-binding protein</fullName>
    </recommendedName>
    <alternativeName>
        <fullName>Albumin D box-binding protein</fullName>
    </alternativeName>
    <alternativeName>
        <fullName>Albumin D-element-binding protein</fullName>
    </alternativeName>
</protein>
<proteinExistence type="evidence at protein level"/>